<reference key="1">
    <citation type="journal article" date="2001" name="Science">
        <title>Complete genome sequence of a virulent isolate of Streptococcus pneumoniae.</title>
        <authorList>
            <person name="Tettelin H."/>
            <person name="Nelson K.E."/>
            <person name="Paulsen I.T."/>
            <person name="Eisen J.A."/>
            <person name="Read T.D."/>
            <person name="Peterson S.N."/>
            <person name="Heidelberg J.F."/>
            <person name="DeBoy R.T."/>
            <person name="Haft D.H."/>
            <person name="Dodson R.J."/>
            <person name="Durkin A.S."/>
            <person name="Gwinn M.L."/>
            <person name="Kolonay J.F."/>
            <person name="Nelson W.C."/>
            <person name="Peterson J.D."/>
            <person name="Umayam L.A."/>
            <person name="White O."/>
            <person name="Salzberg S.L."/>
            <person name="Lewis M.R."/>
            <person name="Radune D."/>
            <person name="Holtzapple E.K."/>
            <person name="Khouri H.M."/>
            <person name="Wolf A.M."/>
            <person name="Utterback T.R."/>
            <person name="Hansen C.L."/>
            <person name="McDonald L.A."/>
            <person name="Feldblyum T.V."/>
            <person name="Angiuoli S.V."/>
            <person name="Dickinson T."/>
            <person name="Hickey E.K."/>
            <person name="Holt I.E."/>
            <person name="Loftus B.J."/>
            <person name="Yang F."/>
            <person name="Smith H.O."/>
            <person name="Venter J.C."/>
            <person name="Dougherty B.A."/>
            <person name="Morrison D.A."/>
            <person name="Hollingshead S.K."/>
            <person name="Fraser C.M."/>
        </authorList>
    </citation>
    <scope>NUCLEOTIDE SEQUENCE [LARGE SCALE GENOMIC DNA]</scope>
    <source>
        <strain>ATCC BAA-334 / TIGR4</strain>
    </source>
</reference>
<evidence type="ECO:0000255" key="1">
    <source>
        <dbReference type="HAMAP-Rule" id="MF_00198"/>
    </source>
</evidence>
<organism>
    <name type="scientific">Streptococcus pneumoniae serotype 4 (strain ATCC BAA-334 / TIGR4)</name>
    <dbReference type="NCBI Taxonomy" id="170187"/>
    <lineage>
        <taxon>Bacteria</taxon>
        <taxon>Bacillati</taxon>
        <taxon>Bacillota</taxon>
        <taxon>Bacilli</taxon>
        <taxon>Lactobacillales</taxon>
        <taxon>Streptococcaceae</taxon>
        <taxon>Streptococcus</taxon>
    </lineage>
</organism>
<sequence length="286" mass="32859">MDLWFSEVHTPDVKLSLRTAKQLYAGKSEWQDIEVLDTPAFGKILILNGHVLFSDADDFVYNEMTVHVPMAVHPNPKKVLVIGGGDGGVAQVLTLYPELEQIDIVEPDEMLVEVCREYFPDFAAGLDDPRVTIYYQNGLRFLRNCEDDYDIIINDATDPFGHTEGLFTKEFYGNSYRALKEDGIMIYQHGSPFFDEDESACRSMHRKVNQAFPISRVYQAHIPTSPAGYWLFGFASKKYHPVKDFDKEGWKKRQLFTEYYTANLHVGAFMLPKYVEDILEEEEGKK</sequence>
<dbReference type="EC" id="2.5.1.16" evidence="1"/>
<dbReference type="EMBL" id="AE005672">
    <property type="protein sequence ID" value="AAK75042.1"/>
    <property type="molecule type" value="Genomic_DNA"/>
</dbReference>
<dbReference type="PIR" id="A95106">
    <property type="entry name" value="A95106"/>
</dbReference>
<dbReference type="RefSeq" id="WP_000366713.1">
    <property type="nucleotide sequence ID" value="NZ_CP155539.1"/>
</dbReference>
<dbReference type="SMR" id="P66835"/>
<dbReference type="PaxDb" id="170187-SP_0918"/>
<dbReference type="EnsemblBacteria" id="AAK75042">
    <property type="protein sequence ID" value="AAK75042"/>
    <property type="gene ID" value="SP_0918"/>
</dbReference>
<dbReference type="KEGG" id="spn:SP_0918"/>
<dbReference type="eggNOG" id="COG0421">
    <property type="taxonomic scope" value="Bacteria"/>
</dbReference>
<dbReference type="PhylomeDB" id="P66835"/>
<dbReference type="BioCyc" id="SPNE170187:G1FZB-945-MONOMER"/>
<dbReference type="UniPathway" id="UPA00248">
    <property type="reaction ID" value="UER00314"/>
</dbReference>
<dbReference type="Proteomes" id="UP000000585">
    <property type="component" value="Chromosome"/>
</dbReference>
<dbReference type="GO" id="GO:0005829">
    <property type="term" value="C:cytosol"/>
    <property type="evidence" value="ECO:0007669"/>
    <property type="project" value="TreeGrafter"/>
</dbReference>
<dbReference type="GO" id="GO:0004766">
    <property type="term" value="F:spermidine synthase activity"/>
    <property type="evidence" value="ECO:0007669"/>
    <property type="project" value="UniProtKB-UniRule"/>
</dbReference>
<dbReference type="GO" id="GO:0008295">
    <property type="term" value="P:spermidine biosynthetic process"/>
    <property type="evidence" value="ECO:0007669"/>
    <property type="project" value="UniProtKB-UniRule"/>
</dbReference>
<dbReference type="CDD" id="cd02440">
    <property type="entry name" value="AdoMet_MTases"/>
    <property type="match status" value="1"/>
</dbReference>
<dbReference type="FunFam" id="2.30.140.10:FF:000007">
    <property type="entry name" value="Polyamine aminopropyltransferase"/>
    <property type="match status" value="1"/>
</dbReference>
<dbReference type="FunFam" id="3.40.50.150:FF:000126">
    <property type="entry name" value="Polyamine aminopropyltransferase"/>
    <property type="match status" value="1"/>
</dbReference>
<dbReference type="Gene3D" id="2.30.140.10">
    <property type="entry name" value="Spermidine synthase, tetramerisation domain"/>
    <property type="match status" value="1"/>
</dbReference>
<dbReference type="Gene3D" id="3.40.50.150">
    <property type="entry name" value="Vaccinia Virus protein VP39"/>
    <property type="match status" value="1"/>
</dbReference>
<dbReference type="HAMAP" id="MF_00198">
    <property type="entry name" value="Spermidine_synth"/>
    <property type="match status" value="1"/>
</dbReference>
<dbReference type="InterPro" id="IPR030374">
    <property type="entry name" value="PABS"/>
</dbReference>
<dbReference type="InterPro" id="IPR029063">
    <property type="entry name" value="SAM-dependent_MTases_sf"/>
</dbReference>
<dbReference type="InterPro" id="IPR001045">
    <property type="entry name" value="Spermi_synthase"/>
</dbReference>
<dbReference type="InterPro" id="IPR035246">
    <property type="entry name" value="Spermidine_synt_N"/>
</dbReference>
<dbReference type="InterPro" id="IPR037163">
    <property type="entry name" value="Spermidine_synt_N_sf"/>
</dbReference>
<dbReference type="NCBIfam" id="NF002010">
    <property type="entry name" value="PRK00811.1"/>
    <property type="match status" value="1"/>
</dbReference>
<dbReference type="NCBIfam" id="TIGR00417">
    <property type="entry name" value="speE"/>
    <property type="match status" value="1"/>
</dbReference>
<dbReference type="PANTHER" id="PTHR11558:SF11">
    <property type="entry name" value="SPERMIDINE SYNTHASE"/>
    <property type="match status" value="1"/>
</dbReference>
<dbReference type="PANTHER" id="PTHR11558">
    <property type="entry name" value="SPERMIDINE/SPERMINE SYNTHASE"/>
    <property type="match status" value="1"/>
</dbReference>
<dbReference type="Pfam" id="PF17284">
    <property type="entry name" value="Spermine_synt_N"/>
    <property type="match status" value="1"/>
</dbReference>
<dbReference type="Pfam" id="PF01564">
    <property type="entry name" value="Spermine_synth"/>
    <property type="match status" value="1"/>
</dbReference>
<dbReference type="SUPFAM" id="SSF53335">
    <property type="entry name" value="S-adenosyl-L-methionine-dependent methyltransferases"/>
    <property type="match status" value="1"/>
</dbReference>
<dbReference type="PROSITE" id="PS51006">
    <property type="entry name" value="PABS_2"/>
    <property type="match status" value="1"/>
</dbReference>
<gene>
    <name evidence="1" type="primary">speE</name>
    <name type="ordered locus">SP_0918</name>
</gene>
<proteinExistence type="inferred from homology"/>
<comment type="function">
    <text evidence="1">Catalyzes the irreversible transfer of a propylamine group from the amino donor S-adenosylmethioninamine (decarboxy-AdoMet) to putrescine (1,4-diaminobutane) to yield spermidine.</text>
</comment>
<comment type="catalytic activity">
    <reaction evidence="1">
        <text>S-adenosyl 3-(methylsulfanyl)propylamine + putrescine = S-methyl-5'-thioadenosine + spermidine + H(+)</text>
        <dbReference type="Rhea" id="RHEA:12721"/>
        <dbReference type="ChEBI" id="CHEBI:15378"/>
        <dbReference type="ChEBI" id="CHEBI:17509"/>
        <dbReference type="ChEBI" id="CHEBI:57443"/>
        <dbReference type="ChEBI" id="CHEBI:57834"/>
        <dbReference type="ChEBI" id="CHEBI:326268"/>
        <dbReference type="EC" id="2.5.1.16"/>
    </reaction>
</comment>
<comment type="pathway">
    <text evidence="1">Amine and polyamine biosynthesis; spermidine biosynthesis; spermidine from putrescine: step 1/1.</text>
</comment>
<comment type="subunit">
    <text evidence="1">Homodimer or homotetramer.</text>
</comment>
<comment type="subcellular location">
    <subcellularLocation>
        <location evidence="1">Cytoplasm</location>
    </subcellularLocation>
</comment>
<comment type="similarity">
    <text evidence="1">Belongs to the spermidine/spermine synthase family.</text>
</comment>
<protein>
    <recommendedName>
        <fullName evidence="1">Polyamine aminopropyltransferase</fullName>
    </recommendedName>
    <alternativeName>
        <fullName evidence="1">Putrescine aminopropyltransferase</fullName>
        <shortName evidence="1">PAPT</shortName>
    </alternativeName>
    <alternativeName>
        <fullName evidence="1">Spermidine synthase</fullName>
        <shortName evidence="1">SPDS</shortName>
        <shortName evidence="1">SPDSY</shortName>
        <ecNumber evidence="1">2.5.1.16</ecNumber>
    </alternativeName>
</protein>
<accession>P66835</accession>
<accession>Q97RA7</accession>
<feature type="chain" id="PRO_0000156510" description="Polyamine aminopropyltransferase">
    <location>
        <begin position="1"/>
        <end position="286"/>
    </location>
</feature>
<feature type="domain" description="PABS" evidence="1">
    <location>
        <begin position="2"/>
        <end position="237"/>
    </location>
</feature>
<feature type="active site" description="Proton acceptor" evidence="1">
    <location>
        <position position="155"/>
    </location>
</feature>
<feature type="binding site" evidence="1">
    <location>
        <position position="31"/>
    </location>
    <ligand>
        <name>S-methyl-5'-thioadenosine</name>
        <dbReference type="ChEBI" id="CHEBI:17509"/>
    </ligand>
</feature>
<feature type="binding site" evidence="1">
    <location>
        <position position="86"/>
    </location>
    <ligand>
        <name>spermidine</name>
        <dbReference type="ChEBI" id="CHEBI:57834"/>
    </ligand>
</feature>
<feature type="binding site" evidence="1">
    <location>
        <position position="106"/>
    </location>
    <ligand>
        <name>S-methyl-5'-thioadenosine</name>
        <dbReference type="ChEBI" id="CHEBI:17509"/>
    </ligand>
</feature>
<feature type="binding site" evidence="1">
    <location>
        <begin position="137"/>
        <end position="138"/>
    </location>
    <ligand>
        <name>S-methyl-5'-thioadenosine</name>
        <dbReference type="ChEBI" id="CHEBI:17509"/>
    </ligand>
</feature>
<keyword id="KW-0963">Cytoplasm</keyword>
<keyword id="KW-0620">Polyamine biosynthesis</keyword>
<keyword id="KW-1185">Reference proteome</keyword>
<keyword id="KW-0745">Spermidine biosynthesis</keyword>
<keyword id="KW-0808">Transferase</keyword>
<name>SPEE_STRPN</name>